<organism>
    <name type="scientific">Akkermansia muciniphila (strain ATCC BAA-835 / DSM 22959 / JCM 33894 / BCRC 81048 / CCUG 64013 / CIP 107961 / Muc)</name>
    <dbReference type="NCBI Taxonomy" id="349741"/>
    <lineage>
        <taxon>Bacteria</taxon>
        <taxon>Pseudomonadati</taxon>
        <taxon>Verrucomicrobiota</taxon>
        <taxon>Verrucomicrobiia</taxon>
        <taxon>Verrucomicrobiales</taxon>
        <taxon>Akkermansiaceae</taxon>
        <taxon>Akkermansia</taxon>
    </lineage>
</organism>
<dbReference type="EC" id="6.3.5.5" evidence="1"/>
<dbReference type="EMBL" id="CP001071">
    <property type="protein sequence ID" value="ACD05075.1"/>
    <property type="molecule type" value="Genomic_DNA"/>
</dbReference>
<dbReference type="RefSeq" id="WP_012420290.1">
    <property type="nucleotide sequence ID" value="NZ_CP071807.1"/>
</dbReference>
<dbReference type="SMR" id="B2URJ0"/>
<dbReference type="STRING" id="349741.Amuc_1250"/>
<dbReference type="PaxDb" id="349741-Amuc_1250"/>
<dbReference type="GeneID" id="60880771"/>
<dbReference type="KEGG" id="amu:Amuc_1250"/>
<dbReference type="eggNOG" id="COG0505">
    <property type="taxonomic scope" value="Bacteria"/>
</dbReference>
<dbReference type="HOGENOM" id="CLU_035901_2_1_0"/>
<dbReference type="OrthoDB" id="9804328at2"/>
<dbReference type="BioCyc" id="AMUC349741:G1GBX-1334-MONOMER"/>
<dbReference type="UniPathway" id="UPA00068">
    <property type="reaction ID" value="UER00171"/>
</dbReference>
<dbReference type="UniPathway" id="UPA00070">
    <property type="reaction ID" value="UER00115"/>
</dbReference>
<dbReference type="Proteomes" id="UP000001031">
    <property type="component" value="Chromosome"/>
</dbReference>
<dbReference type="GO" id="GO:0005524">
    <property type="term" value="F:ATP binding"/>
    <property type="evidence" value="ECO:0007669"/>
    <property type="project" value="UniProtKB-UniRule"/>
</dbReference>
<dbReference type="GO" id="GO:0004088">
    <property type="term" value="F:carbamoyl-phosphate synthase (glutamine-hydrolyzing) activity"/>
    <property type="evidence" value="ECO:0007669"/>
    <property type="project" value="UniProtKB-UniRule"/>
</dbReference>
<dbReference type="GO" id="GO:0004359">
    <property type="term" value="F:glutaminase activity"/>
    <property type="evidence" value="ECO:0007669"/>
    <property type="project" value="RHEA"/>
</dbReference>
<dbReference type="GO" id="GO:0006207">
    <property type="term" value="P:'de novo' pyrimidine nucleobase biosynthetic process"/>
    <property type="evidence" value="ECO:0007669"/>
    <property type="project" value="InterPro"/>
</dbReference>
<dbReference type="GO" id="GO:0044205">
    <property type="term" value="P:'de novo' UMP biosynthetic process"/>
    <property type="evidence" value="ECO:0007669"/>
    <property type="project" value="UniProtKB-UniRule"/>
</dbReference>
<dbReference type="GO" id="GO:0006541">
    <property type="term" value="P:glutamine metabolic process"/>
    <property type="evidence" value="ECO:0007669"/>
    <property type="project" value="InterPro"/>
</dbReference>
<dbReference type="GO" id="GO:0006526">
    <property type="term" value="P:L-arginine biosynthetic process"/>
    <property type="evidence" value="ECO:0007669"/>
    <property type="project" value="UniProtKB-UniRule"/>
</dbReference>
<dbReference type="CDD" id="cd01744">
    <property type="entry name" value="GATase1_CPSase"/>
    <property type="match status" value="1"/>
</dbReference>
<dbReference type="FunFam" id="3.50.30.20:FF:000001">
    <property type="entry name" value="Carbamoyl-phosphate synthase small chain"/>
    <property type="match status" value="1"/>
</dbReference>
<dbReference type="Gene3D" id="3.40.50.880">
    <property type="match status" value="1"/>
</dbReference>
<dbReference type="Gene3D" id="3.50.30.20">
    <property type="entry name" value="Carbamoyl-phosphate synthase small subunit, N-terminal domain"/>
    <property type="match status" value="1"/>
</dbReference>
<dbReference type="HAMAP" id="MF_01209">
    <property type="entry name" value="CPSase_S_chain"/>
    <property type="match status" value="1"/>
</dbReference>
<dbReference type="InterPro" id="IPR050472">
    <property type="entry name" value="Anth_synth/Amidotransfase"/>
</dbReference>
<dbReference type="InterPro" id="IPR006274">
    <property type="entry name" value="CarbamoylP_synth_ssu"/>
</dbReference>
<dbReference type="InterPro" id="IPR002474">
    <property type="entry name" value="CarbamoylP_synth_ssu_N"/>
</dbReference>
<dbReference type="InterPro" id="IPR036480">
    <property type="entry name" value="CarbP_synth_ssu_N_sf"/>
</dbReference>
<dbReference type="InterPro" id="IPR029062">
    <property type="entry name" value="Class_I_gatase-like"/>
</dbReference>
<dbReference type="InterPro" id="IPR035686">
    <property type="entry name" value="CPSase_GATase1"/>
</dbReference>
<dbReference type="InterPro" id="IPR017926">
    <property type="entry name" value="GATASE"/>
</dbReference>
<dbReference type="NCBIfam" id="TIGR01368">
    <property type="entry name" value="CPSaseIIsmall"/>
    <property type="match status" value="1"/>
</dbReference>
<dbReference type="NCBIfam" id="NF009475">
    <property type="entry name" value="PRK12838.1"/>
    <property type="match status" value="1"/>
</dbReference>
<dbReference type="PANTHER" id="PTHR43418:SF7">
    <property type="entry name" value="CARBAMOYL-PHOSPHATE SYNTHASE SMALL CHAIN"/>
    <property type="match status" value="1"/>
</dbReference>
<dbReference type="PANTHER" id="PTHR43418">
    <property type="entry name" value="MULTIFUNCTIONAL TRYPTOPHAN BIOSYNTHESIS PROTEIN-RELATED"/>
    <property type="match status" value="1"/>
</dbReference>
<dbReference type="Pfam" id="PF00988">
    <property type="entry name" value="CPSase_sm_chain"/>
    <property type="match status" value="1"/>
</dbReference>
<dbReference type="Pfam" id="PF00117">
    <property type="entry name" value="GATase"/>
    <property type="match status" value="1"/>
</dbReference>
<dbReference type="PRINTS" id="PR00097">
    <property type="entry name" value="ANTSNTHASEII"/>
</dbReference>
<dbReference type="PRINTS" id="PR00099">
    <property type="entry name" value="CPSGATASE"/>
</dbReference>
<dbReference type="PRINTS" id="PR00096">
    <property type="entry name" value="GATASE"/>
</dbReference>
<dbReference type="SMART" id="SM01097">
    <property type="entry name" value="CPSase_sm_chain"/>
    <property type="match status" value="1"/>
</dbReference>
<dbReference type="SUPFAM" id="SSF52021">
    <property type="entry name" value="Carbamoyl phosphate synthetase, small subunit N-terminal domain"/>
    <property type="match status" value="1"/>
</dbReference>
<dbReference type="SUPFAM" id="SSF52317">
    <property type="entry name" value="Class I glutamine amidotransferase-like"/>
    <property type="match status" value="1"/>
</dbReference>
<dbReference type="PROSITE" id="PS51273">
    <property type="entry name" value="GATASE_TYPE_1"/>
    <property type="match status" value="1"/>
</dbReference>
<reference key="1">
    <citation type="journal article" date="2011" name="PLoS ONE">
        <title>The genome of Akkermansia muciniphila, a dedicated intestinal mucin degrader, and its use in exploring intestinal metagenomes.</title>
        <authorList>
            <person name="van Passel M.W."/>
            <person name="Kant R."/>
            <person name="Zoetendal E.G."/>
            <person name="Plugge C.M."/>
            <person name="Derrien M."/>
            <person name="Malfatti S.A."/>
            <person name="Chain P.S."/>
            <person name="Woyke T."/>
            <person name="Palva A."/>
            <person name="de Vos W.M."/>
            <person name="Smidt H."/>
        </authorList>
    </citation>
    <scope>NUCLEOTIDE SEQUENCE [LARGE SCALE GENOMIC DNA]</scope>
    <source>
        <strain>ATCC BAA-835 / DSM 22959 / JCM 33894 / BCRC 81048 / CCUG 64013 / CIP 107961 / Muc</strain>
    </source>
</reference>
<gene>
    <name evidence="1" type="primary">carA</name>
    <name type="ordered locus">Amuc_1250</name>
</gene>
<comment type="function">
    <text evidence="1">Small subunit of the glutamine-dependent carbamoyl phosphate synthetase (CPSase). CPSase catalyzes the formation of carbamoyl phosphate from the ammonia moiety of glutamine, carbonate, and phosphate donated by ATP, constituting the first step of 2 biosynthetic pathways, one leading to arginine and/or urea and the other to pyrimidine nucleotides. The small subunit (glutamine amidotransferase) binds and cleaves glutamine to supply the large subunit with the substrate ammonia.</text>
</comment>
<comment type="catalytic activity">
    <reaction evidence="1">
        <text>hydrogencarbonate + L-glutamine + 2 ATP + H2O = carbamoyl phosphate + L-glutamate + 2 ADP + phosphate + 2 H(+)</text>
        <dbReference type="Rhea" id="RHEA:18633"/>
        <dbReference type="ChEBI" id="CHEBI:15377"/>
        <dbReference type="ChEBI" id="CHEBI:15378"/>
        <dbReference type="ChEBI" id="CHEBI:17544"/>
        <dbReference type="ChEBI" id="CHEBI:29985"/>
        <dbReference type="ChEBI" id="CHEBI:30616"/>
        <dbReference type="ChEBI" id="CHEBI:43474"/>
        <dbReference type="ChEBI" id="CHEBI:58228"/>
        <dbReference type="ChEBI" id="CHEBI:58359"/>
        <dbReference type="ChEBI" id="CHEBI:456216"/>
        <dbReference type="EC" id="6.3.5.5"/>
    </reaction>
</comment>
<comment type="catalytic activity">
    <molecule>Carbamoyl phosphate synthase small chain</molecule>
    <reaction evidence="1">
        <text>L-glutamine + H2O = L-glutamate + NH4(+)</text>
        <dbReference type="Rhea" id="RHEA:15889"/>
        <dbReference type="ChEBI" id="CHEBI:15377"/>
        <dbReference type="ChEBI" id="CHEBI:28938"/>
        <dbReference type="ChEBI" id="CHEBI:29985"/>
        <dbReference type="ChEBI" id="CHEBI:58359"/>
    </reaction>
</comment>
<comment type="pathway">
    <text evidence="1">Amino-acid biosynthesis; L-arginine biosynthesis; carbamoyl phosphate from bicarbonate: step 1/1.</text>
</comment>
<comment type="pathway">
    <text evidence="1">Pyrimidine metabolism; UMP biosynthesis via de novo pathway; (S)-dihydroorotate from bicarbonate: step 1/3.</text>
</comment>
<comment type="subunit">
    <text evidence="1">Composed of two chains; the small (or glutamine) chain promotes the hydrolysis of glutamine to ammonia, which is used by the large (or ammonia) chain to synthesize carbamoyl phosphate. Tetramer of heterodimers (alpha,beta)4.</text>
</comment>
<comment type="similarity">
    <text evidence="1">Belongs to the CarA family.</text>
</comment>
<protein>
    <recommendedName>
        <fullName evidence="1">Carbamoyl phosphate synthase small chain</fullName>
        <ecNumber evidence="1">6.3.5.5</ecNumber>
    </recommendedName>
    <alternativeName>
        <fullName evidence="1">Carbamoyl phosphate synthetase glutamine chain</fullName>
    </alternativeName>
</protein>
<evidence type="ECO:0000255" key="1">
    <source>
        <dbReference type="HAMAP-Rule" id="MF_01209"/>
    </source>
</evidence>
<name>CARA_AKKM8</name>
<keyword id="KW-0028">Amino-acid biosynthesis</keyword>
<keyword id="KW-0055">Arginine biosynthesis</keyword>
<keyword id="KW-0067">ATP-binding</keyword>
<keyword id="KW-0315">Glutamine amidotransferase</keyword>
<keyword id="KW-0436">Ligase</keyword>
<keyword id="KW-0547">Nucleotide-binding</keyword>
<keyword id="KW-0665">Pyrimidine biosynthesis</keyword>
<keyword id="KW-1185">Reference proteome</keyword>
<proteinExistence type="inferred from homology"/>
<feature type="chain" id="PRO_1000138847" description="Carbamoyl phosphate synthase small chain">
    <location>
        <begin position="1"/>
        <end position="372"/>
    </location>
</feature>
<feature type="domain" description="Glutamine amidotransferase type-1" evidence="1">
    <location>
        <begin position="183"/>
        <end position="369"/>
    </location>
</feature>
<feature type="region of interest" description="CPSase" evidence="1">
    <location>
        <begin position="1"/>
        <end position="179"/>
    </location>
</feature>
<feature type="active site" description="Nucleophile" evidence="1">
    <location>
        <position position="258"/>
    </location>
</feature>
<feature type="active site" evidence="1">
    <location>
        <position position="342"/>
    </location>
</feature>
<feature type="active site" evidence="1">
    <location>
        <position position="344"/>
    </location>
</feature>
<feature type="binding site" evidence="1">
    <location>
        <position position="45"/>
    </location>
    <ligand>
        <name>L-glutamine</name>
        <dbReference type="ChEBI" id="CHEBI:58359"/>
    </ligand>
</feature>
<feature type="binding site" evidence="1">
    <location>
        <position position="231"/>
    </location>
    <ligand>
        <name>L-glutamine</name>
        <dbReference type="ChEBI" id="CHEBI:58359"/>
    </ligand>
</feature>
<feature type="binding site" evidence="1">
    <location>
        <position position="233"/>
    </location>
    <ligand>
        <name>L-glutamine</name>
        <dbReference type="ChEBI" id="CHEBI:58359"/>
    </ligand>
</feature>
<feature type="binding site" evidence="1">
    <location>
        <position position="259"/>
    </location>
    <ligand>
        <name>L-glutamine</name>
        <dbReference type="ChEBI" id="CHEBI:58359"/>
    </ligand>
</feature>
<feature type="binding site" evidence="1">
    <location>
        <position position="262"/>
    </location>
    <ligand>
        <name>L-glutamine</name>
        <dbReference type="ChEBI" id="CHEBI:58359"/>
    </ligand>
</feature>
<feature type="binding site" evidence="1">
    <location>
        <position position="300"/>
    </location>
    <ligand>
        <name>L-glutamine</name>
        <dbReference type="ChEBI" id="CHEBI:58359"/>
    </ligand>
</feature>
<feature type="binding site" evidence="1">
    <location>
        <position position="302"/>
    </location>
    <ligand>
        <name>L-glutamine</name>
        <dbReference type="ChEBI" id="CHEBI:58359"/>
    </ligand>
</feature>
<feature type="binding site" evidence="1">
    <location>
        <position position="303"/>
    </location>
    <ligand>
        <name>L-glutamine</name>
        <dbReference type="ChEBI" id="CHEBI:58359"/>
    </ligand>
</feature>
<sequence>MRAILALEDGSVFIGSHFGATGTEVGEACFNTSMTGYQEVLTDPSYSGQIVTMTYPLIGNYGVNPEDGESGKAQVSGFVVAELAKVHSNWRATESLGPWLEKQGVIGIEGVDTRKIAKHLRSAGAMRACLTTELTPEEAVEAARNAPSMEGCNIVDKIGSHPMTPEEVDALVTGKTLPPAEYDIVAFDFGIKYNILRQLRENGFRVTVVPAHTTAEEVLAMNPDGVFLSNGPGDPATLTDIHREVAALIGKVPMFGICLGHQIISHALGAKTFKLKFGHRGANHPVKDLKTGKISITSQNHGFAVDPDTVPDDVEITLINLNDNTVEGIAHRTLPVFSVQYHPEAAPGPRDPQYLFRDFRKMIAASKRQHAR</sequence>
<accession>B2URJ0</accession>